<keyword id="KW-0002">3D-structure</keyword>
<keyword id="KW-0021">Allosteric enzyme</keyword>
<keyword id="KW-0119">Carbohydrate metabolism</keyword>
<keyword id="KW-0378">Hydrolase</keyword>
<keyword id="KW-1185">Reference proteome</keyword>
<protein>
    <recommendedName>
        <fullName evidence="1">Glucosamine-6-phosphate deaminase</fullName>
        <ecNumber evidence="1">3.5.99.6</ecNumber>
    </recommendedName>
    <alternativeName>
        <fullName evidence="1">GlcN6P deaminase</fullName>
        <shortName evidence="1">GNPDA</shortName>
    </alternativeName>
    <alternativeName>
        <fullName evidence="1">Glucosamine-6-phosphate isomerase</fullName>
    </alternativeName>
</protein>
<dbReference type="EC" id="3.5.99.6" evidence="1"/>
<dbReference type="EMBL" id="AE003853">
    <property type="protein sequence ID" value="AAF96921.1"/>
    <property type="molecule type" value="Genomic_DNA"/>
</dbReference>
<dbReference type="PIR" id="H82387">
    <property type="entry name" value="H82387"/>
</dbReference>
<dbReference type="RefSeq" id="NP_233409.1">
    <property type="nucleotide sequence ID" value="NC_002506.1"/>
</dbReference>
<dbReference type="RefSeq" id="WP_001237050.1">
    <property type="nucleotide sequence ID" value="NZ_LT906615.1"/>
</dbReference>
<dbReference type="PDB" id="4R7T">
    <property type="method" value="X-ray"/>
    <property type="resolution" value="2.10 A"/>
    <property type="chains" value="A/B/C=1-266"/>
</dbReference>
<dbReference type="PDB" id="5HJ5">
    <property type="method" value="X-ray"/>
    <property type="resolution" value="1.70 A"/>
    <property type="chains" value="A/B/C/D=1-266"/>
</dbReference>
<dbReference type="PDBsum" id="4R7T"/>
<dbReference type="PDBsum" id="5HJ5"/>
<dbReference type="SMR" id="Q9KKS5"/>
<dbReference type="STRING" id="243277.VC_A1025"/>
<dbReference type="DNASU" id="2612427"/>
<dbReference type="EnsemblBacteria" id="AAF96921">
    <property type="protein sequence ID" value="AAF96921"/>
    <property type="gene ID" value="VC_A1025"/>
</dbReference>
<dbReference type="GeneID" id="89512109"/>
<dbReference type="KEGG" id="vch:VC_A1025"/>
<dbReference type="PATRIC" id="fig|243277.26.peg.3630"/>
<dbReference type="eggNOG" id="COG0363">
    <property type="taxonomic scope" value="Bacteria"/>
</dbReference>
<dbReference type="HOGENOM" id="CLU_049611_0_1_6"/>
<dbReference type="UniPathway" id="UPA00629">
    <property type="reaction ID" value="UER00684"/>
</dbReference>
<dbReference type="EvolutionaryTrace" id="Q9KKS5"/>
<dbReference type="Proteomes" id="UP000000584">
    <property type="component" value="Chromosome 2"/>
</dbReference>
<dbReference type="GO" id="GO:0005737">
    <property type="term" value="C:cytoplasm"/>
    <property type="evidence" value="ECO:0000318"/>
    <property type="project" value="GO_Central"/>
</dbReference>
<dbReference type="GO" id="GO:0004342">
    <property type="term" value="F:glucosamine-6-phosphate deaminase activity"/>
    <property type="evidence" value="ECO:0000318"/>
    <property type="project" value="GO_Central"/>
</dbReference>
<dbReference type="GO" id="GO:0042802">
    <property type="term" value="F:identical protein binding"/>
    <property type="evidence" value="ECO:0000318"/>
    <property type="project" value="GO_Central"/>
</dbReference>
<dbReference type="GO" id="GO:0005975">
    <property type="term" value="P:carbohydrate metabolic process"/>
    <property type="evidence" value="ECO:0007669"/>
    <property type="project" value="InterPro"/>
</dbReference>
<dbReference type="GO" id="GO:0006043">
    <property type="term" value="P:glucosamine catabolic process"/>
    <property type="evidence" value="ECO:0000318"/>
    <property type="project" value="GO_Central"/>
</dbReference>
<dbReference type="GO" id="GO:0006046">
    <property type="term" value="P:N-acetylglucosamine catabolic process"/>
    <property type="evidence" value="ECO:0000318"/>
    <property type="project" value="GO_Central"/>
</dbReference>
<dbReference type="GO" id="GO:0019262">
    <property type="term" value="P:N-acetylneuraminate catabolic process"/>
    <property type="evidence" value="ECO:0000318"/>
    <property type="project" value="GO_Central"/>
</dbReference>
<dbReference type="CDD" id="cd01399">
    <property type="entry name" value="GlcN6P_deaminase"/>
    <property type="match status" value="1"/>
</dbReference>
<dbReference type="FunFam" id="3.40.50.1360:FF:000002">
    <property type="entry name" value="Glucosamine-6-phosphate deaminase"/>
    <property type="match status" value="1"/>
</dbReference>
<dbReference type="Gene3D" id="3.40.50.1360">
    <property type="match status" value="1"/>
</dbReference>
<dbReference type="HAMAP" id="MF_01241">
    <property type="entry name" value="GlcN6P_deamin"/>
    <property type="match status" value="1"/>
</dbReference>
<dbReference type="InterPro" id="IPR006148">
    <property type="entry name" value="Glc/Gal-6P_isomerase"/>
</dbReference>
<dbReference type="InterPro" id="IPR004547">
    <property type="entry name" value="Glucosamine6P_isomerase"/>
</dbReference>
<dbReference type="InterPro" id="IPR018321">
    <property type="entry name" value="Glucosamine6P_isomerase_CS"/>
</dbReference>
<dbReference type="InterPro" id="IPR037171">
    <property type="entry name" value="NagB/RpiA_transferase-like"/>
</dbReference>
<dbReference type="NCBIfam" id="TIGR00502">
    <property type="entry name" value="nagB"/>
    <property type="match status" value="1"/>
</dbReference>
<dbReference type="NCBIfam" id="NF001685">
    <property type="entry name" value="PRK00443.1-5"/>
    <property type="match status" value="1"/>
</dbReference>
<dbReference type="PANTHER" id="PTHR11280">
    <property type="entry name" value="GLUCOSAMINE-6-PHOSPHATE ISOMERASE"/>
    <property type="match status" value="1"/>
</dbReference>
<dbReference type="PANTHER" id="PTHR11280:SF5">
    <property type="entry name" value="GLUCOSAMINE-6-PHOSPHATE ISOMERASE"/>
    <property type="match status" value="1"/>
</dbReference>
<dbReference type="Pfam" id="PF01182">
    <property type="entry name" value="Glucosamine_iso"/>
    <property type="match status" value="1"/>
</dbReference>
<dbReference type="SUPFAM" id="SSF100950">
    <property type="entry name" value="NagB/RpiA/CoA transferase-like"/>
    <property type="match status" value="1"/>
</dbReference>
<dbReference type="PROSITE" id="PS01161">
    <property type="entry name" value="GLC_GALNAC_ISOMERASE"/>
    <property type="match status" value="1"/>
</dbReference>
<accession>Q9KKS5</accession>
<comment type="function">
    <text evidence="1">Catalyzes the reversible isomerization-deamination of glucosamine 6-phosphate (GlcN6P) to form fructose 6-phosphate (Fru6P) and ammonium ion.</text>
</comment>
<comment type="catalytic activity">
    <reaction evidence="1">
        <text>alpha-D-glucosamine 6-phosphate + H2O = beta-D-fructose 6-phosphate + NH4(+)</text>
        <dbReference type="Rhea" id="RHEA:12172"/>
        <dbReference type="ChEBI" id="CHEBI:15377"/>
        <dbReference type="ChEBI" id="CHEBI:28938"/>
        <dbReference type="ChEBI" id="CHEBI:57634"/>
        <dbReference type="ChEBI" id="CHEBI:75989"/>
        <dbReference type="EC" id="3.5.99.6"/>
    </reaction>
</comment>
<comment type="activity regulation">
    <text evidence="1">Allosterically activated by N-acetylglucosamine 6-phosphate (GlcNAc6P).</text>
</comment>
<comment type="pathway">
    <text evidence="1">Amino-sugar metabolism; N-acetylneuraminate degradation; D-fructose 6-phosphate from N-acetylneuraminate: step 5/5.</text>
</comment>
<comment type="subunit">
    <text evidence="1">Homohexamer.</text>
</comment>
<comment type="similarity">
    <text evidence="1">Belongs to the glucosamine/galactosamine-6-phosphate isomerase family. NagB subfamily.</text>
</comment>
<organism>
    <name type="scientific">Vibrio cholerae serotype O1 (strain ATCC 39315 / El Tor Inaba N16961)</name>
    <dbReference type="NCBI Taxonomy" id="243277"/>
    <lineage>
        <taxon>Bacteria</taxon>
        <taxon>Pseudomonadati</taxon>
        <taxon>Pseudomonadota</taxon>
        <taxon>Gammaproteobacteria</taxon>
        <taxon>Vibrionales</taxon>
        <taxon>Vibrionaceae</taxon>
        <taxon>Vibrio</taxon>
    </lineage>
</organism>
<reference key="1">
    <citation type="journal article" date="2000" name="Nature">
        <title>DNA sequence of both chromosomes of the cholera pathogen Vibrio cholerae.</title>
        <authorList>
            <person name="Heidelberg J.F."/>
            <person name="Eisen J.A."/>
            <person name="Nelson W.C."/>
            <person name="Clayton R.A."/>
            <person name="Gwinn M.L."/>
            <person name="Dodson R.J."/>
            <person name="Haft D.H."/>
            <person name="Hickey E.K."/>
            <person name="Peterson J.D."/>
            <person name="Umayam L.A."/>
            <person name="Gill S.R."/>
            <person name="Nelson K.E."/>
            <person name="Read T.D."/>
            <person name="Tettelin H."/>
            <person name="Richardson D.L."/>
            <person name="Ermolaeva M.D."/>
            <person name="Vamathevan J.J."/>
            <person name="Bass S."/>
            <person name="Qin H."/>
            <person name="Dragoi I."/>
            <person name="Sellers P."/>
            <person name="McDonald L.A."/>
            <person name="Utterback T.R."/>
            <person name="Fleischmann R.D."/>
            <person name="Nierman W.C."/>
            <person name="White O."/>
            <person name="Salzberg S.L."/>
            <person name="Smith H.O."/>
            <person name="Colwell R.R."/>
            <person name="Mekalanos J.J."/>
            <person name="Venter J.C."/>
            <person name="Fraser C.M."/>
        </authorList>
    </citation>
    <scope>NUCLEOTIDE SEQUENCE [LARGE SCALE GENOMIC DNA]</scope>
    <source>
        <strain>ATCC 39315 / El Tor Inaba N16961</strain>
    </source>
</reference>
<proteinExistence type="evidence at protein level"/>
<name>NAGB_VIBCH</name>
<sequence length="266" mass="29548">MRLIPLKAAAQVGKWAAAHIVKRINEFQPTAERPFVLGLPTGGTPLATYKALIEMHKAGEVSFKHVVTFNMDEYVGLAADHPESYRSFMYNNFFNHIDIQEENINLLNGNTDDHEAECKRYEDKIKSYGKINLFMGGVGNDGHIAFNEPASSLSSRTRIKTLTEDTRIANSRFFDGDINQVPKYALTIGVGTLLDAQEIMILVTGHNKALALQAAVEGSVNHLWTVSALQLHPKAVIVCDEPSTQELKVKTVKYFTELEAKNIVGF</sequence>
<gene>
    <name evidence="1" type="primary">nagB</name>
    <name type="ordered locus">VC_A1025</name>
</gene>
<feature type="chain" id="PRO_0000160184" description="Glucosamine-6-phosphate deaminase">
    <location>
        <begin position="1"/>
        <end position="266"/>
    </location>
</feature>
<feature type="active site" description="Proton acceptor; for enolization step" evidence="1">
    <location>
        <position position="72"/>
    </location>
</feature>
<feature type="active site" description="For ring-opening step" evidence="1">
    <location>
        <position position="141"/>
    </location>
</feature>
<feature type="active site" description="Proton acceptor; for ring-opening step" evidence="1">
    <location>
        <position position="143"/>
    </location>
</feature>
<feature type="active site" description="For ring-opening step" evidence="1">
    <location>
        <position position="148"/>
    </location>
</feature>
<feature type="site" description="Part of the allosteric site" evidence="1">
    <location>
        <position position="151"/>
    </location>
</feature>
<feature type="site" description="Part of the allosteric site" evidence="1">
    <location>
        <position position="158"/>
    </location>
</feature>
<feature type="site" description="Part of the allosteric site" evidence="1">
    <location>
        <position position="160"/>
    </location>
</feature>
<feature type="site" description="Part of the allosteric site" evidence="1">
    <location>
        <position position="161"/>
    </location>
</feature>
<feature type="site" description="Part of the allosteric site" evidence="1">
    <location>
        <position position="254"/>
    </location>
</feature>
<feature type="strand" evidence="2">
    <location>
        <begin position="2"/>
        <end position="5"/>
    </location>
</feature>
<feature type="helix" evidence="2">
    <location>
        <begin position="9"/>
        <end position="27"/>
    </location>
</feature>
<feature type="strand" evidence="2">
    <location>
        <begin position="31"/>
        <end position="33"/>
    </location>
</feature>
<feature type="strand" evidence="2">
    <location>
        <begin position="35"/>
        <end position="39"/>
    </location>
</feature>
<feature type="helix" evidence="2">
    <location>
        <begin position="46"/>
        <end position="57"/>
    </location>
</feature>
<feature type="strand" evidence="2">
    <location>
        <begin position="66"/>
        <end position="77"/>
    </location>
</feature>
<feature type="helix" evidence="2">
    <location>
        <begin position="85"/>
        <end position="92"/>
    </location>
</feature>
<feature type="helix" evidence="2">
    <location>
        <begin position="94"/>
        <end position="96"/>
    </location>
</feature>
<feature type="helix" evidence="2">
    <location>
        <begin position="101"/>
        <end position="103"/>
    </location>
</feature>
<feature type="helix" evidence="2">
    <location>
        <begin position="114"/>
        <end position="127"/>
    </location>
</feature>
<feature type="strand" evidence="2">
    <location>
        <begin position="132"/>
        <end position="136"/>
    </location>
</feature>
<feature type="strand" evidence="2">
    <location>
        <begin position="157"/>
        <end position="161"/>
    </location>
</feature>
<feature type="helix" evidence="2">
    <location>
        <begin position="164"/>
        <end position="170"/>
    </location>
</feature>
<feature type="helix" evidence="2">
    <location>
        <begin position="171"/>
        <end position="173"/>
    </location>
</feature>
<feature type="turn" evidence="2">
    <location>
        <begin position="174"/>
        <end position="176"/>
    </location>
</feature>
<feature type="helix" evidence="2">
    <location>
        <begin position="178"/>
        <end position="180"/>
    </location>
</feature>
<feature type="strand" evidence="2">
    <location>
        <begin position="183"/>
        <end position="187"/>
    </location>
</feature>
<feature type="helix" evidence="2">
    <location>
        <begin position="190"/>
        <end position="194"/>
    </location>
</feature>
<feature type="strand" evidence="2">
    <location>
        <begin position="199"/>
        <end position="203"/>
    </location>
</feature>
<feature type="helix" evidence="2">
    <location>
        <begin position="206"/>
        <end position="208"/>
    </location>
</feature>
<feature type="helix" evidence="2">
    <location>
        <begin position="209"/>
        <end position="216"/>
    </location>
</feature>
<feature type="strand" evidence="2">
    <location>
        <begin position="222"/>
        <end position="224"/>
    </location>
</feature>
<feature type="helix" evidence="2">
    <location>
        <begin position="225"/>
        <end position="231"/>
    </location>
</feature>
<feature type="strand" evidence="2">
    <location>
        <begin position="232"/>
        <end position="239"/>
    </location>
</feature>
<feature type="helix" evidence="2">
    <location>
        <begin position="241"/>
        <end position="244"/>
    </location>
</feature>
<feature type="helix" evidence="2">
    <location>
        <begin position="249"/>
        <end position="258"/>
    </location>
</feature>
<feature type="helix" evidence="2">
    <location>
        <begin position="260"/>
        <end position="263"/>
    </location>
</feature>
<evidence type="ECO:0000255" key="1">
    <source>
        <dbReference type="HAMAP-Rule" id="MF_01241"/>
    </source>
</evidence>
<evidence type="ECO:0007829" key="2">
    <source>
        <dbReference type="PDB" id="5HJ5"/>
    </source>
</evidence>